<proteinExistence type="inferred from homology"/>
<gene>
    <name evidence="1" type="primary">grpE</name>
    <name type="ordered locus">Ppha_1087</name>
</gene>
<dbReference type="EMBL" id="CP001110">
    <property type="protein sequence ID" value="ACF43366.1"/>
    <property type="molecule type" value="Genomic_DNA"/>
</dbReference>
<dbReference type="RefSeq" id="WP_012507858.1">
    <property type="nucleotide sequence ID" value="NC_011060.1"/>
</dbReference>
<dbReference type="SMR" id="B4SG55"/>
<dbReference type="STRING" id="324925.Ppha_1087"/>
<dbReference type="KEGG" id="pph:Ppha_1087"/>
<dbReference type="eggNOG" id="COG0576">
    <property type="taxonomic scope" value="Bacteria"/>
</dbReference>
<dbReference type="HOGENOM" id="CLU_057217_5_2_10"/>
<dbReference type="OrthoDB" id="9812586at2"/>
<dbReference type="Proteomes" id="UP000002724">
    <property type="component" value="Chromosome"/>
</dbReference>
<dbReference type="GO" id="GO:0005737">
    <property type="term" value="C:cytoplasm"/>
    <property type="evidence" value="ECO:0007669"/>
    <property type="project" value="UniProtKB-SubCell"/>
</dbReference>
<dbReference type="GO" id="GO:0000774">
    <property type="term" value="F:adenyl-nucleotide exchange factor activity"/>
    <property type="evidence" value="ECO:0007669"/>
    <property type="project" value="InterPro"/>
</dbReference>
<dbReference type="GO" id="GO:0042803">
    <property type="term" value="F:protein homodimerization activity"/>
    <property type="evidence" value="ECO:0007669"/>
    <property type="project" value="InterPro"/>
</dbReference>
<dbReference type="GO" id="GO:0051087">
    <property type="term" value="F:protein-folding chaperone binding"/>
    <property type="evidence" value="ECO:0007669"/>
    <property type="project" value="InterPro"/>
</dbReference>
<dbReference type="GO" id="GO:0051082">
    <property type="term" value="F:unfolded protein binding"/>
    <property type="evidence" value="ECO:0007669"/>
    <property type="project" value="TreeGrafter"/>
</dbReference>
<dbReference type="GO" id="GO:0006457">
    <property type="term" value="P:protein folding"/>
    <property type="evidence" value="ECO:0007669"/>
    <property type="project" value="InterPro"/>
</dbReference>
<dbReference type="CDD" id="cd00446">
    <property type="entry name" value="GrpE"/>
    <property type="match status" value="1"/>
</dbReference>
<dbReference type="FunFam" id="2.30.22.10:FF:000001">
    <property type="entry name" value="Protein GrpE"/>
    <property type="match status" value="1"/>
</dbReference>
<dbReference type="Gene3D" id="3.90.20.20">
    <property type="match status" value="1"/>
</dbReference>
<dbReference type="Gene3D" id="2.30.22.10">
    <property type="entry name" value="Head domain of nucleotide exchange factor GrpE"/>
    <property type="match status" value="1"/>
</dbReference>
<dbReference type="HAMAP" id="MF_01151">
    <property type="entry name" value="GrpE"/>
    <property type="match status" value="1"/>
</dbReference>
<dbReference type="InterPro" id="IPR000740">
    <property type="entry name" value="GrpE"/>
</dbReference>
<dbReference type="InterPro" id="IPR013805">
    <property type="entry name" value="GrpE_coiled_coil"/>
</dbReference>
<dbReference type="InterPro" id="IPR009012">
    <property type="entry name" value="GrpE_head"/>
</dbReference>
<dbReference type="PANTHER" id="PTHR21237">
    <property type="entry name" value="GRPE PROTEIN"/>
    <property type="match status" value="1"/>
</dbReference>
<dbReference type="PANTHER" id="PTHR21237:SF23">
    <property type="entry name" value="GRPE PROTEIN HOMOLOG, MITOCHONDRIAL"/>
    <property type="match status" value="1"/>
</dbReference>
<dbReference type="Pfam" id="PF01025">
    <property type="entry name" value="GrpE"/>
    <property type="match status" value="1"/>
</dbReference>
<dbReference type="PRINTS" id="PR00773">
    <property type="entry name" value="GRPEPROTEIN"/>
</dbReference>
<dbReference type="SUPFAM" id="SSF58014">
    <property type="entry name" value="Coiled-coil domain of nucleotide exchange factor GrpE"/>
    <property type="match status" value="1"/>
</dbReference>
<dbReference type="SUPFAM" id="SSF51064">
    <property type="entry name" value="Head domain of nucleotide exchange factor GrpE"/>
    <property type="match status" value="1"/>
</dbReference>
<dbReference type="PROSITE" id="PS01071">
    <property type="entry name" value="GRPE"/>
    <property type="match status" value="1"/>
</dbReference>
<name>GRPE_PELPB</name>
<accession>B4SG55</accession>
<evidence type="ECO:0000255" key="1">
    <source>
        <dbReference type="HAMAP-Rule" id="MF_01151"/>
    </source>
</evidence>
<protein>
    <recommendedName>
        <fullName evidence="1">Protein GrpE</fullName>
    </recommendedName>
    <alternativeName>
        <fullName evidence="1">HSP-70 cofactor</fullName>
    </alternativeName>
</protein>
<sequence>MTKKVMDEQESHKEYLDEILQAGEVQEDTVPLVEWSQGQSSPEGECTEARIAELETELARQKEQAGKYRDELLRRAADFENFRKQKEREAMMASSRALENIIRELLPVIDDVKRLLDHAPLSAERSSEARPYIEGVEMVKKNLEKWLDEKGVKAIASIGTMLDVNFHEAISQIDSPDAEPDMIVDEYQTGYLLGERVIRHAKVIVAR</sequence>
<feature type="chain" id="PRO_1000137592" description="Protein GrpE">
    <location>
        <begin position="1"/>
        <end position="207"/>
    </location>
</feature>
<reference key="1">
    <citation type="submission" date="2008-06" db="EMBL/GenBank/DDBJ databases">
        <title>Complete sequence of Pelodictyon phaeoclathratiforme BU-1.</title>
        <authorList>
            <consortium name="US DOE Joint Genome Institute"/>
            <person name="Lucas S."/>
            <person name="Copeland A."/>
            <person name="Lapidus A."/>
            <person name="Glavina del Rio T."/>
            <person name="Dalin E."/>
            <person name="Tice H."/>
            <person name="Bruce D."/>
            <person name="Goodwin L."/>
            <person name="Pitluck S."/>
            <person name="Schmutz J."/>
            <person name="Larimer F."/>
            <person name="Land M."/>
            <person name="Hauser L."/>
            <person name="Kyrpides N."/>
            <person name="Mikhailova N."/>
            <person name="Liu Z."/>
            <person name="Li T."/>
            <person name="Zhao F."/>
            <person name="Overmann J."/>
            <person name="Bryant D.A."/>
            <person name="Richardson P."/>
        </authorList>
    </citation>
    <scope>NUCLEOTIDE SEQUENCE [LARGE SCALE GENOMIC DNA]</scope>
    <source>
        <strain>DSM 5477 / BU-1</strain>
    </source>
</reference>
<keyword id="KW-0143">Chaperone</keyword>
<keyword id="KW-0963">Cytoplasm</keyword>
<keyword id="KW-1185">Reference proteome</keyword>
<keyword id="KW-0346">Stress response</keyword>
<organism>
    <name type="scientific">Pelodictyon phaeoclathratiforme (strain DSM 5477 / BU-1)</name>
    <dbReference type="NCBI Taxonomy" id="324925"/>
    <lineage>
        <taxon>Bacteria</taxon>
        <taxon>Pseudomonadati</taxon>
        <taxon>Chlorobiota</taxon>
        <taxon>Chlorobiia</taxon>
        <taxon>Chlorobiales</taxon>
        <taxon>Chlorobiaceae</taxon>
        <taxon>Chlorobium/Pelodictyon group</taxon>
        <taxon>Pelodictyon</taxon>
    </lineage>
</organism>
<comment type="function">
    <text evidence="1">Participates actively in the response to hyperosmotic and heat shock by preventing the aggregation of stress-denatured proteins, in association with DnaK and GrpE. It is the nucleotide exchange factor for DnaK and may function as a thermosensor. Unfolded proteins bind initially to DnaJ; upon interaction with the DnaJ-bound protein, DnaK hydrolyzes its bound ATP, resulting in the formation of a stable complex. GrpE releases ADP from DnaK; ATP binding to DnaK triggers the release of the substrate protein, thus completing the reaction cycle. Several rounds of ATP-dependent interactions between DnaJ, DnaK and GrpE are required for fully efficient folding.</text>
</comment>
<comment type="subunit">
    <text evidence="1">Homodimer.</text>
</comment>
<comment type="subcellular location">
    <subcellularLocation>
        <location evidence="1">Cytoplasm</location>
    </subcellularLocation>
</comment>
<comment type="similarity">
    <text evidence="1">Belongs to the GrpE family.</text>
</comment>